<proteinExistence type="inferred from homology"/>
<organism>
    <name type="scientific">Rhodopseudomonas palustris (strain BisA53)</name>
    <dbReference type="NCBI Taxonomy" id="316055"/>
    <lineage>
        <taxon>Bacteria</taxon>
        <taxon>Pseudomonadati</taxon>
        <taxon>Pseudomonadota</taxon>
        <taxon>Alphaproteobacteria</taxon>
        <taxon>Hyphomicrobiales</taxon>
        <taxon>Nitrobacteraceae</taxon>
        <taxon>Rhodopseudomonas</taxon>
    </lineage>
</organism>
<sequence>MLGWVVTFLVVALIAGILGFGGIAGASIEIAKIIFFIAVVLFLVSAVIGLARGRTRV</sequence>
<name>Y2138_RHOP5</name>
<evidence type="ECO:0000255" key="1">
    <source>
        <dbReference type="HAMAP-Rule" id="MF_01361"/>
    </source>
</evidence>
<protein>
    <recommendedName>
        <fullName evidence="1">UPF0391 membrane protein RPE_2138</fullName>
    </recommendedName>
</protein>
<keyword id="KW-1003">Cell membrane</keyword>
<keyword id="KW-0472">Membrane</keyword>
<keyword id="KW-0812">Transmembrane</keyword>
<keyword id="KW-1133">Transmembrane helix</keyword>
<accession>Q07PQ2</accession>
<reference key="1">
    <citation type="submission" date="2006-09" db="EMBL/GenBank/DDBJ databases">
        <title>Complete sequence of Rhodopseudomonas palustris BisA53.</title>
        <authorList>
            <consortium name="US DOE Joint Genome Institute"/>
            <person name="Copeland A."/>
            <person name="Lucas S."/>
            <person name="Lapidus A."/>
            <person name="Barry K."/>
            <person name="Detter J.C."/>
            <person name="Glavina del Rio T."/>
            <person name="Hammon N."/>
            <person name="Israni S."/>
            <person name="Dalin E."/>
            <person name="Tice H."/>
            <person name="Pitluck S."/>
            <person name="Chain P."/>
            <person name="Malfatti S."/>
            <person name="Shin M."/>
            <person name="Vergez L."/>
            <person name="Schmutz J."/>
            <person name="Larimer F."/>
            <person name="Land M."/>
            <person name="Hauser L."/>
            <person name="Pelletier D.A."/>
            <person name="Kyrpides N."/>
            <person name="Kim E."/>
            <person name="Harwood C.S."/>
            <person name="Oda Y."/>
            <person name="Richardson P."/>
        </authorList>
    </citation>
    <scope>NUCLEOTIDE SEQUENCE [LARGE SCALE GENOMIC DNA]</scope>
    <source>
        <strain>BisA53</strain>
    </source>
</reference>
<comment type="subcellular location">
    <subcellularLocation>
        <location evidence="1">Cell membrane</location>
        <topology evidence="1">Multi-pass membrane protein</topology>
    </subcellularLocation>
</comment>
<comment type="similarity">
    <text evidence="1">Belongs to the UPF0391 family.</text>
</comment>
<dbReference type="EMBL" id="CP000463">
    <property type="protein sequence ID" value="ABJ06082.1"/>
    <property type="molecule type" value="Genomic_DNA"/>
</dbReference>
<dbReference type="STRING" id="316055.RPE_2138"/>
<dbReference type="KEGG" id="rpe:RPE_2138"/>
<dbReference type="eggNOG" id="COG5487">
    <property type="taxonomic scope" value="Bacteria"/>
</dbReference>
<dbReference type="HOGENOM" id="CLU_187346_2_1_5"/>
<dbReference type="GO" id="GO:0005886">
    <property type="term" value="C:plasma membrane"/>
    <property type="evidence" value="ECO:0007669"/>
    <property type="project" value="UniProtKB-SubCell"/>
</dbReference>
<dbReference type="HAMAP" id="MF_01361">
    <property type="entry name" value="UPF0391"/>
    <property type="match status" value="1"/>
</dbReference>
<dbReference type="InterPro" id="IPR009760">
    <property type="entry name" value="DUF1328"/>
</dbReference>
<dbReference type="NCBIfam" id="NF010228">
    <property type="entry name" value="PRK13682.1-3"/>
    <property type="match status" value="1"/>
</dbReference>
<dbReference type="NCBIfam" id="NF010229">
    <property type="entry name" value="PRK13682.1-4"/>
    <property type="match status" value="1"/>
</dbReference>
<dbReference type="Pfam" id="PF07043">
    <property type="entry name" value="DUF1328"/>
    <property type="match status" value="1"/>
</dbReference>
<dbReference type="PIRSF" id="PIRSF036466">
    <property type="entry name" value="UCP036466"/>
    <property type="match status" value="1"/>
</dbReference>
<gene>
    <name type="ordered locus">RPE_2138</name>
</gene>
<feature type="chain" id="PRO_5000133504" description="UPF0391 membrane protein RPE_2138">
    <location>
        <begin position="1"/>
        <end position="57"/>
    </location>
</feature>
<feature type="transmembrane region" description="Helical" evidence="1">
    <location>
        <begin position="4"/>
        <end position="24"/>
    </location>
</feature>
<feature type="transmembrane region" description="Helical" evidence="1">
    <location>
        <begin position="30"/>
        <end position="50"/>
    </location>
</feature>